<name>SYN_SHESH</name>
<dbReference type="EC" id="6.1.1.22" evidence="1"/>
<dbReference type="EMBL" id="CP000821">
    <property type="protein sequence ID" value="ABV36971.1"/>
    <property type="molecule type" value="Genomic_DNA"/>
</dbReference>
<dbReference type="RefSeq" id="WP_012142706.1">
    <property type="nucleotide sequence ID" value="NC_009831.1"/>
</dbReference>
<dbReference type="SMR" id="A8FVU8"/>
<dbReference type="STRING" id="425104.Ssed_2362"/>
<dbReference type="KEGG" id="sse:Ssed_2362"/>
<dbReference type="eggNOG" id="COG0017">
    <property type="taxonomic scope" value="Bacteria"/>
</dbReference>
<dbReference type="HOGENOM" id="CLU_004553_2_0_6"/>
<dbReference type="OrthoDB" id="9762036at2"/>
<dbReference type="Proteomes" id="UP000002015">
    <property type="component" value="Chromosome"/>
</dbReference>
<dbReference type="GO" id="GO:0005737">
    <property type="term" value="C:cytoplasm"/>
    <property type="evidence" value="ECO:0007669"/>
    <property type="project" value="UniProtKB-SubCell"/>
</dbReference>
<dbReference type="GO" id="GO:0004816">
    <property type="term" value="F:asparagine-tRNA ligase activity"/>
    <property type="evidence" value="ECO:0007669"/>
    <property type="project" value="UniProtKB-UniRule"/>
</dbReference>
<dbReference type="GO" id="GO:0005524">
    <property type="term" value="F:ATP binding"/>
    <property type="evidence" value="ECO:0007669"/>
    <property type="project" value="UniProtKB-UniRule"/>
</dbReference>
<dbReference type="GO" id="GO:0003676">
    <property type="term" value="F:nucleic acid binding"/>
    <property type="evidence" value="ECO:0007669"/>
    <property type="project" value="InterPro"/>
</dbReference>
<dbReference type="GO" id="GO:0006421">
    <property type="term" value="P:asparaginyl-tRNA aminoacylation"/>
    <property type="evidence" value="ECO:0007669"/>
    <property type="project" value="UniProtKB-UniRule"/>
</dbReference>
<dbReference type="CDD" id="cd00776">
    <property type="entry name" value="AsxRS_core"/>
    <property type="match status" value="1"/>
</dbReference>
<dbReference type="CDD" id="cd04318">
    <property type="entry name" value="EcAsnRS_like_N"/>
    <property type="match status" value="1"/>
</dbReference>
<dbReference type="FunFam" id="3.30.930.10:FF:000016">
    <property type="entry name" value="Asparagine--tRNA ligase"/>
    <property type="match status" value="1"/>
</dbReference>
<dbReference type="Gene3D" id="3.30.930.10">
    <property type="entry name" value="Bira Bifunctional Protein, Domain 2"/>
    <property type="match status" value="1"/>
</dbReference>
<dbReference type="Gene3D" id="2.40.50.140">
    <property type="entry name" value="Nucleic acid-binding proteins"/>
    <property type="match status" value="1"/>
</dbReference>
<dbReference type="HAMAP" id="MF_00534">
    <property type="entry name" value="Asn_tRNA_synth"/>
    <property type="match status" value="1"/>
</dbReference>
<dbReference type="InterPro" id="IPR004364">
    <property type="entry name" value="Aa-tRNA-synt_II"/>
</dbReference>
<dbReference type="InterPro" id="IPR006195">
    <property type="entry name" value="aa-tRNA-synth_II"/>
</dbReference>
<dbReference type="InterPro" id="IPR045864">
    <property type="entry name" value="aa-tRNA-synth_II/BPL/LPL"/>
</dbReference>
<dbReference type="InterPro" id="IPR004522">
    <property type="entry name" value="Asn-tRNA-ligase"/>
</dbReference>
<dbReference type="InterPro" id="IPR002312">
    <property type="entry name" value="Asp/Asn-tRNA-synth_IIb"/>
</dbReference>
<dbReference type="InterPro" id="IPR012340">
    <property type="entry name" value="NA-bd_OB-fold"/>
</dbReference>
<dbReference type="InterPro" id="IPR004365">
    <property type="entry name" value="NA-bd_OB_tRNA"/>
</dbReference>
<dbReference type="NCBIfam" id="TIGR00457">
    <property type="entry name" value="asnS"/>
    <property type="match status" value="1"/>
</dbReference>
<dbReference type="NCBIfam" id="NF003037">
    <property type="entry name" value="PRK03932.1"/>
    <property type="match status" value="1"/>
</dbReference>
<dbReference type="PANTHER" id="PTHR22594:SF34">
    <property type="entry name" value="ASPARAGINE--TRNA LIGASE, MITOCHONDRIAL-RELATED"/>
    <property type="match status" value="1"/>
</dbReference>
<dbReference type="PANTHER" id="PTHR22594">
    <property type="entry name" value="ASPARTYL/LYSYL-TRNA SYNTHETASE"/>
    <property type="match status" value="1"/>
</dbReference>
<dbReference type="Pfam" id="PF00152">
    <property type="entry name" value="tRNA-synt_2"/>
    <property type="match status" value="1"/>
</dbReference>
<dbReference type="Pfam" id="PF01336">
    <property type="entry name" value="tRNA_anti-codon"/>
    <property type="match status" value="1"/>
</dbReference>
<dbReference type="PRINTS" id="PR01042">
    <property type="entry name" value="TRNASYNTHASP"/>
</dbReference>
<dbReference type="SUPFAM" id="SSF55681">
    <property type="entry name" value="Class II aaRS and biotin synthetases"/>
    <property type="match status" value="1"/>
</dbReference>
<dbReference type="SUPFAM" id="SSF50249">
    <property type="entry name" value="Nucleic acid-binding proteins"/>
    <property type="match status" value="1"/>
</dbReference>
<dbReference type="PROSITE" id="PS50862">
    <property type="entry name" value="AA_TRNA_LIGASE_II"/>
    <property type="match status" value="1"/>
</dbReference>
<comment type="catalytic activity">
    <reaction evidence="1">
        <text>tRNA(Asn) + L-asparagine + ATP = L-asparaginyl-tRNA(Asn) + AMP + diphosphate + H(+)</text>
        <dbReference type="Rhea" id="RHEA:11180"/>
        <dbReference type="Rhea" id="RHEA-COMP:9659"/>
        <dbReference type="Rhea" id="RHEA-COMP:9674"/>
        <dbReference type="ChEBI" id="CHEBI:15378"/>
        <dbReference type="ChEBI" id="CHEBI:30616"/>
        <dbReference type="ChEBI" id="CHEBI:33019"/>
        <dbReference type="ChEBI" id="CHEBI:58048"/>
        <dbReference type="ChEBI" id="CHEBI:78442"/>
        <dbReference type="ChEBI" id="CHEBI:78515"/>
        <dbReference type="ChEBI" id="CHEBI:456215"/>
        <dbReference type="EC" id="6.1.1.22"/>
    </reaction>
</comment>
<comment type="subunit">
    <text evidence="1">Homodimer.</text>
</comment>
<comment type="subcellular location">
    <subcellularLocation>
        <location evidence="1">Cytoplasm</location>
    </subcellularLocation>
</comment>
<comment type="similarity">
    <text evidence="1">Belongs to the class-II aminoacyl-tRNA synthetase family.</text>
</comment>
<protein>
    <recommendedName>
        <fullName evidence="1">Asparagine--tRNA ligase</fullName>
        <ecNumber evidence="1">6.1.1.22</ecNumber>
    </recommendedName>
    <alternativeName>
        <fullName evidence="1">Asparaginyl-tRNA synthetase</fullName>
        <shortName evidence="1">AsnRS</shortName>
    </alternativeName>
</protein>
<evidence type="ECO:0000255" key="1">
    <source>
        <dbReference type="HAMAP-Rule" id="MF_00534"/>
    </source>
</evidence>
<organism>
    <name type="scientific">Shewanella sediminis (strain HAW-EB3)</name>
    <dbReference type="NCBI Taxonomy" id="425104"/>
    <lineage>
        <taxon>Bacteria</taxon>
        <taxon>Pseudomonadati</taxon>
        <taxon>Pseudomonadota</taxon>
        <taxon>Gammaproteobacteria</taxon>
        <taxon>Alteromonadales</taxon>
        <taxon>Shewanellaceae</taxon>
        <taxon>Shewanella</taxon>
    </lineage>
</organism>
<proteinExistence type="inferred from homology"/>
<gene>
    <name evidence="1" type="primary">asnS</name>
    <name type="ordered locus">Ssed_2362</name>
</gene>
<reference key="1">
    <citation type="submission" date="2007-08" db="EMBL/GenBank/DDBJ databases">
        <title>Complete sequence of Shewanella sediminis HAW-EB3.</title>
        <authorList>
            <consortium name="US DOE Joint Genome Institute"/>
            <person name="Copeland A."/>
            <person name="Lucas S."/>
            <person name="Lapidus A."/>
            <person name="Barry K."/>
            <person name="Glavina del Rio T."/>
            <person name="Dalin E."/>
            <person name="Tice H."/>
            <person name="Pitluck S."/>
            <person name="Chertkov O."/>
            <person name="Brettin T."/>
            <person name="Bruce D."/>
            <person name="Detter J.C."/>
            <person name="Han C."/>
            <person name="Schmutz J."/>
            <person name="Larimer F."/>
            <person name="Land M."/>
            <person name="Hauser L."/>
            <person name="Kyrpides N."/>
            <person name="Kim E."/>
            <person name="Zhao J.-S."/>
            <person name="Richardson P."/>
        </authorList>
    </citation>
    <scope>NUCLEOTIDE SEQUENCE [LARGE SCALE GENOMIC DNA]</scope>
    <source>
        <strain>HAW-EB3</strain>
    </source>
</reference>
<feature type="chain" id="PRO_1000081857" description="Asparagine--tRNA ligase">
    <location>
        <begin position="1"/>
        <end position="466"/>
    </location>
</feature>
<keyword id="KW-0030">Aminoacyl-tRNA synthetase</keyword>
<keyword id="KW-0067">ATP-binding</keyword>
<keyword id="KW-0963">Cytoplasm</keyword>
<keyword id="KW-0436">Ligase</keyword>
<keyword id="KW-0547">Nucleotide-binding</keyword>
<keyword id="KW-0648">Protein biosynthesis</keyword>
<keyword id="KW-1185">Reference proteome</keyword>
<accession>A8FVU8</accession>
<sequence>MSITSVASVFKGEFAIGSQVTVRGWVRSRRDSKAGISFLAVYDGSCFDPIQGVVPNSLENYNDEILKLTAGCSVVMTGEVVDSPGKGQAFELQVSSVEVAGWVEDPDTYPMAAKRHSIEHLRELAHLRPRTNIIGAVARVRNSLSQAIHRFYHEQGFIWVSTPLITASDAEGAGEMFRVSTLDMENLPRNDEGKVDYSEDFFGKESFLTVSGQLNAETYASALSKVYTFGPTFRAENSNTSRHLAEFWMVEPEVAFADLDDVAGLAEQMLKFCFKAVLEERRDDLEFFAQRVDKTVIDRLESFVSSDFAQVDYTDAVEILKSCGKKFEYPVEWGIDLQSEHERYLAEEHFKAPVVVKNYPKDIKAFYMRLNDDGKTVAAMDVLAPGIGEIIGGAQREERLDVLDARLEEMNLSKEDYWWYRDMRRYGTVPHSGFGLGFERLVSYVTGVSNIRDVIPFPRAPKSASF</sequence>